<accession>L0T864</accession>
<reference key="1">
    <citation type="journal article" date="1998" name="Nature">
        <title>Deciphering the biology of Mycobacterium tuberculosis from the complete genome sequence.</title>
        <authorList>
            <person name="Cole S.T."/>
            <person name="Brosch R."/>
            <person name="Parkhill J."/>
            <person name="Garnier T."/>
            <person name="Churcher C.M."/>
            <person name="Harris D.E."/>
            <person name="Gordon S.V."/>
            <person name="Eiglmeier K."/>
            <person name="Gas S."/>
            <person name="Barry C.E. III"/>
            <person name="Tekaia F."/>
            <person name="Badcock K."/>
            <person name="Basham D."/>
            <person name="Brown D."/>
            <person name="Chillingworth T."/>
            <person name="Connor R."/>
            <person name="Davies R.M."/>
            <person name="Devlin K."/>
            <person name="Feltwell T."/>
            <person name="Gentles S."/>
            <person name="Hamlin N."/>
            <person name="Holroyd S."/>
            <person name="Hornsby T."/>
            <person name="Jagels K."/>
            <person name="Krogh A."/>
            <person name="McLean J."/>
            <person name="Moule S."/>
            <person name="Murphy L.D."/>
            <person name="Oliver S."/>
            <person name="Osborne J."/>
            <person name="Quail M.A."/>
            <person name="Rajandream M.A."/>
            <person name="Rogers J."/>
            <person name="Rutter S."/>
            <person name="Seeger K."/>
            <person name="Skelton S."/>
            <person name="Squares S."/>
            <person name="Squares R."/>
            <person name="Sulston J.E."/>
            <person name="Taylor K."/>
            <person name="Whitehead S."/>
            <person name="Barrell B.G."/>
        </authorList>
    </citation>
    <scope>NUCLEOTIDE SEQUENCE [LARGE SCALE GENOMIC DNA]</scope>
    <source>
        <strain>ATCC 25618 / H37Rv</strain>
    </source>
</reference>
<reference key="2">
    <citation type="journal article" date="2008" name="Biochemistry (Mosc.)">
        <title>Novel DNA glycosylases from Mycobacterium tuberculosis.</title>
        <authorList>
            <person name="Sidorenko V.S."/>
            <person name="Rot M.A."/>
            <person name="Filipenko M.L."/>
            <person name="Nevinsky G.A."/>
            <person name="Zharkov D.O."/>
        </authorList>
    </citation>
    <scope>DISCUSSION OF FUNCTION</scope>
    <source>
        <strain>KHA94</strain>
    </source>
</reference>
<reference key="3">
    <citation type="journal article" date="2010" name="DNA Repair">
        <title>The oxidative DNA glycosylases of Mycobacterium tuberculosis exhibit different substrate preferences from their Escherichia coli counterparts.</title>
        <authorList>
            <person name="Guo Y."/>
            <person name="Bandaru V."/>
            <person name="Jaruga P."/>
            <person name="Zhao X."/>
            <person name="Burrows C.J."/>
            <person name="Iwai S."/>
            <person name="Dizdaroglu M."/>
            <person name="Bond J.P."/>
            <person name="Wallace S.S."/>
        </authorList>
    </citation>
    <scope>DISCUSSION OF FUNCTION</scope>
    <scope>LACK OF DNA-BINDING</scope>
    <source>
        <strain>ATCC 25618 / H37Rv</strain>
    </source>
</reference>
<reference key="4">
    <citation type="journal article" date="2011" name="Tuberculosis">
        <title>Base excision and nucleotide excision repair pathways in mycobacteria.</title>
        <authorList>
            <person name="Kurthkoti K."/>
            <person name="Varshney U."/>
        </authorList>
    </citation>
    <scope>REVIEW</scope>
</reference>
<name>FPG2_MYCTU</name>
<sequence length="158" mass="16495">MAGTPQPRALGPDALDVSTDDLAGLLAGNTGRIKTVITDQKVIAGIGNAYSDEILHVAKISPFATAGKLSGAQLTCLHEAMASVLSDAVRRSVGQGAAMLKGEKRSGLRVHARTGLPCPVCGDTVREVSFADKSFQYCPTCQTGGKALADRRMSRLLK</sequence>
<gene>
    <name type="primary">fpg2</name>
    <name type="ordered locus">Rv0944</name>
</gene>
<organism>
    <name type="scientific">Mycobacterium tuberculosis (strain ATCC 25618 / H37Rv)</name>
    <dbReference type="NCBI Taxonomy" id="83332"/>
    <lineage>
        <taxon>Bacteria</taxon>
        <taxon>Bacillati</taxon>
        <taxon>Actinomycetota</taxon>
        <taxon>Actinomycetes</taxon>
        <taxon>Mycobacteriales</taxon>
        <taxon>Mycobacteriaceae</taxon>
        <taxon>Mycobacterium</taxon>
        <taxon>Mycobacterium tuberculosis complex</taxon>
    </lineage>
</organism>
<dbReference type="EMBL" id="AL123456">
    <property type="protein sequence ID" value="CCP43692.1"/>
    <property type="molecule type" value="Genomic_DNA"/>
</dbReference>
<dbReference type="PIR" id="F70715">
    <property type="entry name" value="F70715"/>
</dbReference>
<dbReference type="RefSeq" id="NP_215459.1">
    <property type="nucleotide sequence ID" value="NC_000962.3"/>
</dbReference>
<dbReference type="RefSeq" id="WP_003404828.1">
    <property type="nucleotide sequence ID" value="NZ_NVQJ01000001.1"/>
</dbReference>
<dbReference type="SMR" id="L0T864"/>
<dbReference type="STRING" id="83332.Rv0944"/>
<dbReference type="PaxDb" id="83332-Rv0944"/>
<dbReference type="GeneID" id="885888"/>
<dbReference type="KEGG" id="mtu:Rv0944"/>
<dbReference type="KEGG" id="mtv:RVBD_0944"/>
<dbReference type="TubercuList" id="Rv0944"/>
<dbReference type="eggNOG" id="COG0266">
    <property type="taxonomic scope" value="Bacteria"/>
</dbReference>
<dbReference type="InParanoid" id="L0T864"/>
<dbReference type="OrthoDB" id="9800855at2"/>
<dbReference type="PhylomeDB" id="L0T864"/>
<dbReference type="Proteomes" id="UP000001584">
    <property type="component" value="Chromosome"/>
</dbReference>
<dbReference type="GO" id="GO:0009274">
    <property type="term" value="C:peptidoglycan-based cell wall"/>
    <property type="evidence" value="ECO:0007005"/>
    <property type="project" value="UniProtKB"/>
</dbReference>
<dbReference type="GO" id="GO:0005886">
    <property type="term" value="C:plasma membrane"/>
    <property type="evidence" value="ECO:0007005"/>
    <property type="project" value="UniProtKB"/>
</dbReference>
<dbReference type="GO" id="GO:0003906">
    <property type="term" value="F:DNA-(apurinic or apyrimidinic site) endonuclease activity"/>
    <property type="evidence" value="ECO:0007669"/>
    <property type="project" value="InterPro"/>
</dbReference>
<dbReference type="GO" id="GO:0004519">
    <property type="term" value="F:endonuclease activity"/>
    <property type="evidence" value="ECO:0000314"/>
    <property type="project" value="UniProtKB"/>
</dbReference>
<dbReference type="GO" id="GO:0016799">
    <property type="term" value="F:hydrolase activity, hydrolyzing N-glycosyl compounds"/>
    <property type="evidence" value="ECO:0007669"/>
    <property type="project" value="InterPro"/>
</dbReference>
<dbReference type="GO" id="GO:0003676">
    <property type="term" value="F:nucleic acid binding"/>
    <property type="evidence" value="ECO:0007669"/>
    <property type="project" value="InterPro"/>
</dbReference>
<dbReference type="GO" id="GO:0008270">
    <property type="term" value="F:zinc ion binding"/>
    <property type="evidence" value="ECO:0007669"/>
    <property type="project" value="UniProtKB-KW"/>
</dbReference>
<dbReference type="GO" id="GO:0034599">
    <property type="term" value="P:cellular response to oxidative stress"/>
    <property type="evidence" value="ECO:0000315"/>
    <property type="project" value="UniProtKB"/>
</dbReference>
<dbReference type="GO" id="GO:0006281">
    <property type="term" value="P:DNA repair"/>
    <property type="evidence" value="ECO:0000315"/>
    <property type="project" value="UniProtKB"/>
</dbReference>
<dbReference type="GO" id="GO:0006289">
    <property type="term" value="P:nucleotide-excision repair"/>
    <property type="evidence" value="ECO:0000315"/>
    <property type="project" value="UniProtKB"/>
</dbReference>
<dbReference type="Gene3D" id="1.10.8.50">
    <property type="match status" value="1"/>
</dbReference>
<dbReference type="InterPro" id="IPR015886">
    <property type="entry name" value="DNA_glyclase/AP_lyase_DNA-bd"/>
</dbReference>
<dbReference type="InterPro" id="IPR010979">
    <property type="entry name" value="Ribosomal_uS13-like_H2TH"/>
</dbReference>
<dbReference type="InterPro" id="IPR000214">
    <property type="entry name" value="Znf_DNA_glyclase/AP_lyase"/>
</dbReference>
<dbReference type="InterPro" id="IPR010663">
    <property type="entry name" value="Znf_FPG/IleRS"/>
</dbReference>
<dbReference type="PANTHER" id="PTHR22993">
    <property type="entry name" value="FORMAMIDOPYRIMIDINE-DNA GLYCOSYLASE"/>
    <property type="match status" value="1"/>
</dbReference>
<dbReference type="PANTHER" id="PTHR22993:SF9">
    <property type="entry name" value="FORMAMIDOPYRIMIDINE-DNA GLYCOSYLASE"/>
    <property type="match status" value="1"/>
</dbReference>
<dbReference type="Pfam" id="PF06831">
    <property type="entry name" value="H2TH"/>
    <property type="match status" value="1"/>
</dbReference>
<dbReference type="Pfam" id="PF06827">
    <property type="entry name" value="zf-FPG_IleRS"/>
    <property type="match status" value="1"/>
</dbReference>
<dbReference type="SMART" id="SM01232">
    <property type="entry name" value="H2TH"/>
    <property type="match status" value="1"/>
</dbReference>
<dbReference type="SUPFAM" id="SSF57716">
    <property type="entry name" value="Glucocorticoid receptor-like (DNA-binding domain)"/>
    <property type="match status" value="1"/>
</dbReference>
<dbReference type="SUPFAM" id="SSF46946">
    <property type="entry name" value="S13-like H2TH domain"/>
    <property type="match status" value="1"/>
</dbReference>
<dbReference type="PROSITE" id="PS51066">
    <property type="entry name" value="ZF_FPG_2"/>
    <property type="match status" value="1"/>
</dbReference>
<proteinExistence type="evidence at protein level"/>
<evidence type="ECO:0000255" key="1">
    <source>
        <dbReference type="PROSITE-ProRule" id="PRU00391"/>
    </source>
</evidence>
<evidence type="ECO:0000305" key="2"/>
<comment type="caution">
    <text evidence="2">May be non-functional, contains only the C-terminal section of a formamidopyrimidine-DNA glycosylase and has no detectable DNA-binding activity.</text>
</comment>
<keyword id="KW-0479">Metal-binding</keyword>
<keyword id="KW-1185">Reference proteome</keyword>
<keyword id="KW-0862">Zinc</keyword>
<keyword id="KW-0863">Zinc-finger</keyword>
<feature type="chain" id="PRO_0000421384" description="Uncharacterized formamidopyrimidine-DNA glycosylase-like protein">
    <location>
        <begin position="1"/>
        <end position="158"/>
    </location>
</feature>
<feature type="zinc finger region" description="FPG-type" evidence="1">
    <location>
        <begin position="109"/>
        <end position="143"/>
    </location>
</feature>
<protein>
    <recommendedName>
        <fullName>Uncharacterized formamidopyrimidine-DNA glycosylase-like protein</fullName>
    </recommendedName>
</protein>